<name>YGL1_SCHPO</name>
<gene>
    <name type="ORF">SPBC216.01c</name>
    <name type="ORF">SPBC713.13c</name>
</gene>
<keyword id="KW-0539">Nucleus</keyword>
<keyword id="KW-1185">Reference proteome</keyword>
<proteinExistence type="evidence at transcript level"/>
<protein>
    <recommendedName>
        <fullName>Uncharacterized protein C216.01c</fullName>
    </recommendedName>
</protein>
<accession>Q9Y7J8</accession>
<accession>P78839</accession>
<accession>Q9C1W2</accession>
<accession>Q9UTV1</accession>
<organism>
    <name type="scientific">Schizosaccharomyces pombe (strain 972 / ATCC 24843)</name>
    <name type="common">Fission yeast</name>
    <dbReference type="NCBI Taxonomy" id="284812"/>
    <lineage>
        <taxon>Eukaryota</taxon>
        <taxon>Fungi</taxon>
        <taxon>Dikarya</taxon>
        <taxon>Ascomycota</taxon>
        <taxon>Taphrinomycotina</taxon>
        <taxon>Schizosaccharomycetes</taxon>
        <taxon>Schizosaccharomycetales</taxon>
        <taxon>Schizosaccharomycetaceae</taxon>
        <taxon>Schizosaccharomyces</taxon>
    </lineage>
</organism>
<evidence type="ECO:0000256" key="1">
    <source>
        <dbReference type="SAM" id="MobiDB-lite"/>
    </source>
</evidence>
<evidence type="ECO:0000269" key="2">
    <source>
    </source>
</evidence>
<evidence type="ECO:0000269" key="3">
    <source>
    </source>
</evidence>
<evidence type="ECO:0000305" key="4"/>
<feature type="chain" id="PRO_0000116761" description="Uncharacterized protein C216.01c">
    <location>
        <begin position="1"/>
        <end position="836"/>
    </location>
</feature>
<feature type="region of interest" description="Disordered" evidence="1">
    <location>
        <begin position="1"/>
        <end position="25"/>
    </location>
</feature>
<feature type="region of interest" description="Disordered" evidence="1">
    <location>
        <begin position="692"/>
        <end position="718"/>
    </location>
</feature>
<feature type="region of interest" description="Disordered" evidence="1">
    <location>
        <begin position="789"/>
        <end position="836"/>
    </location>
</feature>
<feature type="compositionally biased region" description="Polar residues" evidence="1">
    <location>
        <begin position="789"/>
        <end position="799"/>
    </location>
</feature>
<feature type="compositionally biased region" description="Polar residues" evidence="1">
    <location>
        <begin position="825"/>
        <end position="836"/>
    </location>
</feature>
<feature type="sequence conflict" description="In Ref. 3; BAA87281." evidence="4" ref="3">
    <original>KTQLIAEDIYSR</original>
    <variation>ENTIDCGRYIQP</variation>
    <location>
        <begin position="90"/>
        <end position="101"/>
    </location>
</feature>
<feature type="sequence conflict" description="In Ref. 2; BAA13850." evidence="4" ref="2">
    <original>H</original>
    <variation>D</variation>
    <location>
        <position position="468"/>
    </location>
</feature>
<comment type="subcellular location">
    <subcellularLocation>
        <location evidence="2 3">Nucleus</location>
    </subcellularLocation>
</comment>
<reference key="1">
    <citation type="journal article" date="2002" name="Nature">
        <title>The genome sequence of Schizosaccharomyces pombe.</title>
        <authorList>
            <person name="Wood V."/>
            <person name="Gwilliam R."/>
            <person name="Rajandream M.A."/>
            <person name="Lyne M.H."/>
            <person name="Lyne R."/>
            <person name="Stewart A."/>
            <person name="Sgouros J.G."/>
            <person name="Peat N."/>
            <person name="Hayles J."/>
            <person name="Baker S.G."/>
            <person name="Basham D."/>
            <person name="Bowman S."/>
            <person name="Brooks K."/>
            <person name="Brown D."/>
            <person name="Brown S."/>
            <person name="Chillingworth T."/>
            <person name="Churcher C.M."/>
            <person name="Collins M."/>
            <person name="Connor R."/>
            <person name="Cronin A."/>
            <person name="Davis P."/>
            <person name="Feltwell T."/>
            <person name="Fraser A."/>
            <person name="Gentles S."/>
            <person name="Goble A."/>
            <person name="Hamlin N."/>
            <person name="Harris D.E."/>
            <person name="Hidalgo J."/>
            <person name="Hodgson G."/>
            <person name="Holroyd S."/>
            <person name="Hornsby T."/>
            <person name="Howarth S."/>
            <person name="Huckle E.J."/>
            <person name="Hunt S."/>
            <person name="Jagels K."/>
            <person name="James K.D."/>
            <person name="Jones L."/>
            <person name="Jones M."/>
            <person name="Leather S."/>
            <person name="McDonald S."/>
            <person name="McLean J."/>
            <person name="Mooney P."/>
            <person name="Moule S."/>
            <person name="Mungall K.L."/>
            <person name="Murphy L.D."/>
            <person name="Niblett D."/>
            <person name="Odell C."/>
            <person name="Oliver K."/>
            <person name="O'Neil S."/>
            <person name="Pearson D."/>
            <person name="Quail M.A."/>
            <person name="Rabbinowitsch E."/>
            <person name="Rutherford K.M."/>
            <person name="Rutter S."/>
            <person name="Saunders D."/>
            <person name="Seeger K."/>
            <person name="Sharp S."/>
            <person name="Skelton J."/>
            <person name="Simmonds M.N."/>
            <person name="Squares R."/>
            <person name="Squares S."/>
            <person name="Stevens K."/>
            <person name="Taylor K."/>
            <person name="Taylor R.G."/>
            <person name="Tivey A."/>
            <person name="Walsh S.V."/>
            <person name="Warren T."/>
            <person name="Whitehead S."/>
            <person name="Woodward J.R."/>
            <person name="Volckaert G."/>
            <person name="Aert R."/>
            <person name="Robben J."/>
            <person name="Grymonprez B."/>
            <person name="Weltjens I."/>
            <person name="Vanstreels E."/>
            <person name="Rieger M."/>
            <person name="Schaefer M."/>
            <person name="Mueller-Auer S."/>
            <person name="Gabel C."/>
            <person name="Fuchs M."/>
            <person name="Duesterhoeft A."/>
            <person name="Fritzc C."/>
            <person name="Holzer E."/>
            <person name="Moestl D."/>
            <person name="Hilbert H."/>
            <person name="Borzym K."/>
            <person name="Langer I."/>
            <person name="Beck A."/>
            <person name="Lehrach H."/>
            <person name="Reinhardt R."/>
            <person name="Pohl T.M."/>
            <person name="Eger P."/>
            <person name="Zimmermann W."/>
            <person name="Wedler H."/>
            <person name="Wambutt R."/>
            <person name="Purnelle B."/>
            <person name="Goffeau A."/>
            <person name="Cadieu E."/>
            <person name="Dreano S."/>
            <person name="Gloux S."/>
            <person name="Lelaure V."/>
            <person name="Mottier S."/>
            <person name="Galibert F."/>
            <person name="Aves S.J."/>
            <person name="Xiang Z."/>
            <person name="Hunt C."/>
            <person name="Moore K."/>
            <person name="Hurst S.M."/>
            <person name="Lucas M."/>
            <person name="Rochet M."/>
            <person name="Gaillardin C."/>
            <person name="Tallada V.A."/>
            <person name="Garzon A."/>
            <person name="Thode G."/>
            <person name="Daga R.R."/>
            <person name="Cruzado L."/>
            <person name="Jimenez J."/>
            <person name="Sanchez M."/>
            <person name="del Rey F."/>
            <person name="Benito J."/>
            <person name="Dominguez A."/>
            <person name="Revuelta J.L."/>
            <person name="Moreno S."/>
            <person name="Armstrong J."/>
            <person name="Forsburg S.L."/>
            <person name="Cerutti L."/>
            <person name="Lowe T."/>
            <person name="McCombie W.R."/>
            <person name="Paulsen I."/>
            <person name="Potashkin J."/>
            <person name="Shpakovski G.V."/>
            <person name="Ussery D."/>
            <person name="Barrell B.G."/>
            <person name="Nurse P."/>
        </authorList>
    </citation>
    <scope>NUCLEOTIDE SEQUENCE [LARGE SCALE GENOMIC DNA]</scope>
    <source>
        <strain>972 / ATCC 24843</strain>
    </source>
</reference>
<reference key="2">
    <citation type="journal article" date="1997" name="DNA Res.">
        <title>Identification of open reading frames in Schizosaccharomyces pombe cDNAs.</title>
        <authorList>
            <person name="Yoshioka S."/>
            <person name="Kato K."/>
            <person name="Nakai K."/>
            <person name="Okayama H."/>
            <person name="Nojima H."/>
        </authorList>
    </citation>
    <scope>NUCLEOTIDE SEQUENCE [LARGE SCALE MRNA] OF 260-468</scope>
    <source>
        <strain>PR745</strain>
    </source>
</reference>
<reference key="3">
    <citation type="journal article" date="2000" name="Genes Cells">
        <title>Large-scale screening of intracellular protein localization in living fission yeast cells by the use of a GFP-fusion genomic DNA library.</title>
        <authorList>
            <person name="Ding D.-Q."/>
            <person name="Tomita Y."/>
            <person name="Yamamoto A."/>
            <person name="Chikashige Y."/>
            <person name="Haraguchi T."/>
            <person name="Hiraoka Y."/>
        </authorList>
    </citation>
    <scope>NUCLEOTIDE SEQUENCE [LARGE SCALE GENOMIC DNA] OF 90-220</scope>
    <scope>SUBCELLULAR LOCATION</scope>
    <source>
        <strain>ATCC 38364 / 968</strain>
    </source>
</reference>
<reference key="4">
    <citation type="journal article" date="2006" name="Nat. Biotechnol.">
        <title>ORFeome cloning and global analysis of protein localization in the fission yeast Schizosaccharomyces pombe.</title>
        <authorList>
            <person name="Matsuyama A."/>
            <person name="Arai R."/>
            <person name="Yashiroda Y."/>
            <person name="Shirai A."/>
            <person name="Kamata A."/>
            <person name="Sekido S."/>
            <person name="Kobayashi Y."/>
            <person name="Hashimoto A."/>
            <person name="Hamamoto M."/>
            <person name="Hiraoka Y."/>
            <person name="Horinouchi S."/>
            <person name="Yoshida M."/>
        </authorList>
    </citation>
    <scope>SUBCELLULAR LOCATION [LARGE SCALE ANALYSIS]</scope>
</reference>
<sequence>MDSTKEEEDLNNNIDEISDGENEEEELDEAIAAALQKIEVPSIPRRVKVYEMEDENWVDCGTGYCDGKIEGPLAYFIVRSEADNETILLKTQLIAEDIYSRQEETLIVWQELNGTDLALSFQESSGCIDMWMFLANVQKAISSVTRSYSNDDILTDEGALNENYLNTVDLPAPELANLKEIEEAVYGYMQSIQSRDSLVRYVSNENYIDRLIELFPLCEDLENTDDLHRLCSIIKSFVQLNDAPLLESLFSNDEKLMCVAGILEYDPEFPNIKANHREYLMDSKKFKQVVPIQDPRILAKIHQTFKLQYLRDVVVSRIVDEPSFSVLNSFIFFNQADIIQYLQTNEKFLHELFSIYVNEGEDDQRKQDGIFFIQQVCNIAKGLQFQSCSALFATFVKFNLLKALDYAMSHENNSVRNAGSDILVSIIDHEPAIVWQKFDQDRKDASSSLSNAHVSQHSLLSNLINILHKESNPGVLAQISEAFKMLLSLPGSYAYNNPYRNADGNVRNKTDNIIGINFIENFYDNSFNMLAAPLLELENVSSLDVKKLDMYMHLCELFCYFFRIHDYWSRRFDTYKTLTSKVALLLYSDRKYVVLSALRFIRSCLAARQSEMSLIMLETDTYGKVLDLMLKVKDQTNLVNSAALEFFEFLRSEGSEDTLDYLNKNYRPQLESLNNLSTFSELLNIIDGLSSDSRSPKTVGTHESNSYEFDGASNNNQRVGDDVSKDWEIQQDFSIENDTELSEKVGQRTVLDSIAPAELNIEDSCEQPKQPILEDRYFLESAVYDTSAESSGINVSNTRYSKRKSDFQVDDQQADDESPKKRLSIDSSSAQNGYAS</sequence>
<dbReference type="EMBL" id="CU329671">
    <property type="protein sequence ID" value="CAC22614.2"/>
    <property type="molecule type" value="Genomic_DNA"/>
</dbReference>
<dbReference type="EMBL" id="D89188">
    <property type="protein sequence ID" value="BAA13850.1"/>
    <property type="molecule type" value="mRNA"/>
</dbReference>
<dbReference type="EMBL" id="AB027977">
    <property type="protein sequence ID" value="BAA87281.1"/>
    <property type="molecule type" value="Genomic_DNA"/>
</dbReference>
<dbReference type="PIR" id="T39907">
    <property type="entry name" value="T42746"/>
</dbReference>
<dbReference type="RefSeq" id="XP_001713123.1">
    <property type="nucleotide sequence ID" value="XM_001713071.2"/>
</dbReference>
<dbReference type="BioGRID" id="277249">
    <property type="interactions" value="74"/>
</dbReference>
<dbReference type="FunCoup" id="Q9Y7J8">
    <property type="interactions" value="694"/>
</dbReference>
<dbReference type="STRING" id="284812.Q9Y7J8"/>
<dbReference type="iPTMnet" id="Q9Y7J8"/>
<dbReference type="PaxDb" id="4896-SPBC216.01c.1"/>
<dbReference type="EnsemblFungi" id="SPBC216.01c.1">
    <property type="protein sequence ID" value="SPBC216.01c.1:pep"/>
    <property type="gene ID" value="SPBC216.01c"/>
</dbReference>
<dbReference type="PomBase" id="SPBC216.01c"/>
<dbReference type="VEuPathDB" id="FungiDB:SPBC216.01c"/>
<dbReference type="eggNOG" id="KOG2175">
    <property type="taxonomic scope" value="Eukaryota"/>
</dbReference>
<dbReference type="HOGENOM" id="CLU_004909_0_1_1"/>
<dbReference type="InParanoid" id="Q9Y7J8"/>
<dbReference type="OMA" id="ALMTHNN"/>
<dbReference type="PhylomeDB" id="Q9Y7J8"/>
<dbReference type="PRO" id="PR:Q9Y7J8"/>
<dbReference type="Proteomes" id="UP000002485">
    <property type="component" value="Chromosome II"/>
</dbReference>
<dbReference type="GO" id="GO:0000785">
    <property type="term" value="C:chromatin"/>
    <property type="evidence" value="ECO:0000269"/>
    <property type="project" value="PomBase"/>
</dbReference>
<dbReference type="GO" id="GO:0005654">
    <property type="term" value="C:nucleoplasm"/>
    <property type="evidence" value="ECO:0000318"/>
    <property type="project" value="GO_Central"/>
</dbReference>
<dbReference type="GO" id="GO:0005634">
    <property type="term" value="C:nucleus"/>
    <property type="evidence" value="ECO:0007005"/>
    <property type="project" value="PomBase"/>
</dbReference>
<dbReference type="GO" id="GO:0030289">
    <property type="term" value="C:protein phosphatase 4 complex"/>
    <property type="evidence" value="ECO:0000318"/>
    <property type="project" value="GO_Central"/>
</dbReference>
<dbReference type="GO" id="GO:0072542">
    <property type="term" value="F:protein phosphatase activator activity"/>
    <property type="evidence" value="ECO:0000269"/>
    <property type="project" value="PomBase"/>
</dbReference>
<dbReference type="GO" id="GO:0006974">
    <property type="term" value="P:DNA damage response"/>
    <property type="evidence" value="ECO:0000318"/>
    <property type="project" value="GO_Central"/>
</dbReference>
<dbReference type="GO" id="GO:0045875">
    <property type="term" value="P:negative regulation of sister chromatid cohesion"/>
    <property type="evidence" value="ECO:0000269"/>
    <property type="project" value="PomBase"/>
</dbReference>
<dbReference type="GO" id="GO:2000779">
    <property type="term" value="P:regulation of double-strand break repair"/>
    <property type="evidence" value="ECO:0000318"/>
    <property type="project" value="GO_Central"/>
</dbReference>
<dbReference type="GO" id="GO:0023052">
    <property type="term" value="P:signaling"/>
    <property type="evidence" value="ECO:0000303"/>
    <property type="project" value="PomBase"/>
</dbReference>
<dbReference type="FunFam" id="2.30.29.30:FF:000455">
    <property type="entry name" value="Psy2p"/>
    <property type="match status" value="1"/>
</dbReference>
<dbReference type="Gene3D" id="2.30.29.30">
    <property type="entry name" value="Pleckstrin-homology domain (PH domain)/Phosphotyrosine-binding domain (PTB)"/>
    <property type="match status" value="1"/>
</dbReference>
<dbReference type="InterPro" id="IPR055236">
    <property type="entry name" value="EVH1_PP4R3"/>
</dbReference>
<dbReference type="InterPro" id="IPR006887">
    <property type="entry name" value="P4R3-like_central_dom"/>
</dbReference>
<dbReference type="InterPro" id="IPR011993">
    <property type="entry name" value="PH-like_dom_sf"/>
</dbReference>
<dbReference type="InterPro" id="IPR051137">
    <property type="entry name" value="PP4R3-like"/>
</dbReference>
<dbReference type="PANTHER" id="PTHR23318">
    <property type="entry name" value="ATP SYNTHASE GAMMA-RELATED"/>
    <property type="match status" value="1"/>
</dbReference>
<dbReference type="PANTHER" id="PTHR23318:SF0">
    <property type="entry name" value="SERINE_THREONINE-PROTEIN PHOSPHATASE 4 REGULATORY SUBUNIT 3"/>
    <property type="match status" value="1"/>
</dbReference>
<dbReference type="Pfam" id="PF22972">
    <property type="entry name" value="EVH1_PP4R3"/>
    <property type="match status" value="1"/>
</dbReference>
<dbReference type="Pfam" id="PF04802">
    <property type="entry name" value="PP4R3"/>
    <property type="match status" value="1"/>
</dbReference>